<feature type="chain" id="PRO_0000319850" description="Probable capsid protein">
    <location>
        <begin position="1"/>
        <end position="250"/>
    </location>
</feature>
<feature type="region of interest" description="DNA-binding" evidence="1">
    <location>
        <begin position="1"/>
        <end position="38"/>
    </location>
</feature>
<feature type="region of interest" description="Disordered" evidence="3">
    <location>
        <begin position="1"/>
        <end position="24"/>
    </location>
</feature>
<feature type="region of interest" description="Nuclear localization signals" evidence="2">
    <location>
        <begin position="5"/>
        <end position="38"/>
    </location>
</feature>
<organismHost>
    <name type="scientific">Anser</name>
    <name type="common">geese</name>
    <dbReference type="NCBI Taxonomy" id="8842"/>
</organismHost>
<accession>Q91EK1</accession>
<reference key="1">
    <citation type="journal article" date="2001" name="Virology">
        <title>Genome sequence determinations and analyses of novel circoviruses from goose and pigeon.</title>
        <authorList>
            <person name="Todd D."/>
            <person name="Weston J.H."/>
            <person name="Soike D."/>
            <person name="Smyth J.A."/>
        </authorList>
    </citation>
    <scope>NUCLEOTIDE SEQUENCE [GENOMIC DNA]</scope>
</reference>
<gene>
    <name type="primary">Cap</name>
    <name type="ORF">ORFC1</name>
</gene>
<protein>
    <recommendedName>
        <fullName>Probable capsid protein</fullName>
    </recommendedName>
</protein>
<proteinExistence type="inferred from homology"/>
<evidence type="ECO:0000250" key="1"/>
<evidence type="ECO:0000255" key="2"/>
<evidence type="ECO:0000256" key="3">
    <source>
        <dbReference type="SAM" id="MobiDB-lite"/>
    </source>
</evidence>
<evidence type="ECO:0000305" key="4"/>
<sequence>MPLYRARPRSLYSRRRRATNRRRRYRRRRLHIGRIRSKYTIFNVKQTQNISFTFFGTGSPDKNKWQAMSLEAVQSSGTSPKPGINLRFAVFGDRLPGTGNQYHYPFDYYMIRMVKVELRPAFNPFQRVRTQGSTYIDKEGNITTTTSGGEWNVDPYAAMSSRKTWSPHRYHKRVFVPKPTIQQGGTGTNIWSTWYTPGGRQLWLNSIQDNVVFYGMGMSLRQAEDTAAPLTVEATITYYIRFGQWTGLSP</sequence>
<keyword id="KW-0167">Capsid protein</keyword>
<keyword id="KW-0238">DNA-binding</keyword>
<keyword id="KW-1048">Host nucleus</keyword>
<keyword id="KW-0945">Host-virus interaction</keyword>
<keyword id="KW-1185">Reference proteome</keyword>
<keyword id="KW-1140">T=1 icosahedral capsid protein</keyword>
<keyword id="KW-1161">Viral attachment to host cell</keyword>
<keyword id="KW-1162">Viral penetration into host cytoplasm</keyword>
<keyword id="KW-1163">Viral penetration into host nucleus</keyword>
<keyword id="KW-0946">Virion</keyword>
<keyword id="KW-1164">Virus endocytosis by host</keyword>
<keyword id="KW-1160">Virus entry into host cell</keyword>
<name>CAPSD_GOCV</name>
<comment type="function">
    <text evidence="1">Self-assembles to form the virion icosahedral capsid with a T=1 symmetry. This very small capsid (17 - 22 nm in diameter) allows the virus to be very stable in the environment and resistant to some disinfectants, including detergents. Essential for the initial attachment to heparan sulfate moieties and chondroitin sulfate B of the host cell surface proteoglycans. After attachment, the virus is endocytosed and traffics to the nucleus. The capsid protein binds and transports the viral genome and Rep across the nuclear envelope (By similarity).</text>
</comment>
<comment type="subunit">
    <text evidence="1">Homomultimer. Assembles in the nucleus, presumably in an immature form, then migrates to the cytoplasm once assembled as mature virion. Interacts with Rep; this interaction relocates Rep into the nucleus (By similarity).</text>
</comment>
<comment type="subcellular location">
    <subcellularLocation>
        <location evidence="1">Host nucleus</location>
    </subcellularLocation>
    <subcellularLocation>
        <location evidence="4">Virion</location>
    </subcellularLocation>
</comment>
<comment type="similarity">
    <text evidence="4">Belongs to the circoviridae capsid protein family.</text>
</comment>
<dbReference type="EMBL" id="AJ304456">
    <property type="protein sequence ID" value="CAC50263.1"/>
    <property type="molecule type" value="Genomic_DNA"/>
</dbReference>
<dbReference type="RefSeq" id="NP_150370.1">
    <property type="nucleotide sequence ID" value="NC_003054.1"/>
</dbReference>
<dbReference type="SMR" id="Q91EK1"/>
<dbReference type="KEGG" id="vg:1732844"/>
<dbReference type="OrthoDB" id="7660at10239"/>
<dbReference type="Proteomes" id="UP000185275">
    <property type="component" value="Genome"/>
</dbReference>
<dbReference type="GO" id="GO:0043657">
    <property type="term" value="C:host cell"/>
    <property type="evidence" value="ECO:0007669"/>
    <property type="project" value="GOC"/>
</dbReference>
<dbReference type="GO" id="GO:0042025">
    <property type="term" value="C:host cell nucleus"/>
    <property type="evidence" value="ECO:0007669"/>
    <property type="project" value="UniProtKB-SubCell"/>
</dbReference>
<dbReference type="GO" id="GO:0039615">
    <property type="term" value="C:T=1 icosahedral viral capsid"/>
    <property type="evidence" value="ECO:0007669"/>
    <property type="project" value="UniProtKB-KW"/>
</dbReference>
<dbReference type="GO" id="GO:0003677">
    <property type="term" value="F:DNA binding"/>
    <property type="evidence" value="ECO:0007669"/>
    <property type="project" value="UniProtKB-KW"/>
</dbReference>
<dbReference type="GO" id="GO:0075509">
    <property type="term" value="P:endocytosis involved in viral entry into host cell"/>
    <property type="evidence" value="ECO:0007669"/>
    <property type="project" value="UniProtKB-KW"/>
</dbReference>
<dbReference type="GO" id="GO:0019069">
    <property type="term" value="P:viral capsid assembly"/>
    <property type="evidence" value="ECO:0007669"/>
    <property type="project" value="InterPro"/>
</dbReference>
<dbReference type="GO" id="GO:0075732">
    <property type="term" value="P:viral penetration into host nucleus"/>
    <property type="evidence" value="ECO:0007669"/>
    <property type="project" value="UniProtKB-KW"/>
</dbReference>
<dbReference type="GO" id="GO:0019062">
    <property type="term" value="P:virion attachment to host cell"/>
    <property type="evidence" value="ECO:0007669"/>
    <property type="project" value="UniProtKB-KW"/>
</dbReference>
<dbReference type="Gene3D" id="2.60.120.950">
    <property type="entry name" value="Circovirus capsid protein"/>
    <property type="match status" value="1"/>
</dbReference>
<dbReference type="InterPro" id="IPR003383">
    <property type="entry name" value="Circovirus_capsid"/>
</dbReference>
<dbReference type="InterPro" id="IPR038652">
    <property type="entry name" value="Circovirus_capsid_sf"/>
</dbReference>
<dbReference type="Pfam" id="PF02443">
    <property type="entry name" value="Circo_capsid"/>
    <property type="match status" value="1"/>
</dbReference>
<organism>
    <name type="scientific">Goose circovirus</name>
    <name type="common">GoCV</name>
    <dbReference type="NCBI Taxonomy" id="146032"/>
    <lineage>
        <taxon>Viruses</taxon>
        <taxon>Monodnaviria</taxon>
        <taxon>Shotokuvirae</taxon>
        <taxon>Cressdnaviricota</taxon>
        <taxon>Arfiviricetes</taxon>
        <taxon>Cirlivirales</taxon>
        <taxon>Circoviridae</taxon>
        <taxon>Circovirus</taxon>
        <taxon>Circovirus goose</taxon>
    </lineage>
</organism>